<name>FABZ_ANAPZ</name>
<evidence type="ECO:0000255" key="1">
    <source>
        <dbReference type="HAMAP-Rule" id="MF_00406"/>
    </source>
</evidence>
<proteinExistence type="inferred from homology"/>
<protein>
    <recommendedName>
        <fullName evidence="1">3-hydroxyacyl-[acyl-carrier-protein] dehydratase FabZ</fullName>
        <ecNumber evidence="1">4.2.1.59</ecNumber>
    </recommendedName>
    <alternativeName>
        <fullName evidence="1">(3R)-hydroxymyristoyl-[acyl-carrier-protein] dehydratase</fullName>
        <shortName evidence="1">(3R)-hydroxymyristoyl-ACP dehydrase</shortName>
    </alternativeName>
    <alternativeName>
        <fullName evidence="1">Beta-hydroxyacyl-ACP dehydratase</fullName>
    </alternativeName>
</protein>
<dbReference type="EC" id="4.2.1.59" evidence="1"/>
<dbReference type="EMBL" id="CP000235">
    <property type="protein sequence ID" value="ABD43791.1"/>
    <property type="molecule type" value="Genomic_DNA"/>
</dbReference>
<dbReference type="RefSeq" id="WP_011451246.1">
    <property type="nucleotide sequence ID" value="NC_007797.1"/>
</dbReference>
<dbReference type="SMR" id="Q2GIR2"/>
<dbReference type="STRING" id="212042.APH_1208"/>
<dbReference type="PaxDb" id="212042-APH_1208"/>
<dbReference type="EnsemblBacteria" id="ABD43791">
    <property type="protein sequence ID" value="ABD43791"/>
    <property type="gene ID" value="APH_1208"/>
</dbReference>
<dbReference type="GeneID" id="92747901"/>
<dbReference type="KEGG" id="aph:APH_1208"/>
<dbReference type="eggNOG" id="COG0764">
    <property type="taxonomic scope" value="Bacteria"/>
</dbReference>
<dbReference type="HOGENOM" id="CLU_078912_1_2_5"/>
<dbReference type="Proteomes" id="UP000001943">
    <property type="component" value="Chromosome"/>
</dbReference>
<dbReference type="GO" id="GO:0005737">
    <property type="term" value="C:cytoplasm"/>
    <property type="evidence" value="ECO:0007669"/>
    <property type="project" value="UniProtKB-SubCell"/>
</dbReference>
<dbReference type="GO" id="GO:0016020">
    <property type="term" value="C:membrane"/>
    <property type="evidence" value="ECO:0007669"/>
    <property type="project" value="GOC"/>
</dbReference>
<dbReference type="GO" id="GO:0019171">
    <property type="term" value="F:(3R)-hydroxyacyl-[acyl-carrier-protein] dehydratase activity"/>
    <property type="evidence" value="ECO:0007669"/>
    <property type="project" value="UniProtKB-EC"/>
</dbReference>
<dbReference type="GO" id="GO:0006633">
    <property type="term" value="P:fatty acid biosynthetic process"/>
    <property type="evidence" value="ECO:0007669"/>
    <property type="project" value="UniProtKB-UniRule"/>
</dbReference>
<dbReference type="GO" id="GO:0009245">
    <property type="term" value="P:lipid A biosynthetic process"/>
    <property type="evidence" value="ECO:0007669"/>
    <property type="project" value="UniProtKB-UniRule"/>
</dbReference>
<dbReference type="CDD" id="cd01288">
    <property type="entry name" value="FabZ"/>
    <property type="match status" value="1"/>
</dbReference>
<dbReference type="FunFam" id="3.10.129.10:FF:000001">
    <property type="entry name" value="3-hydroxyacyl-[acyl-carrier-protein] dehydratase FabZ"/>
    <property type="match status" value="1"/>
</dbReference>
<dbReference type="Gene3D" id="3.10.129.10">
    <property type="entry name" value="Hotdog Thioesterase"/>
    <property type="match status" value="1"/>
</dbReference>
<dbReference type="HAMAP" id="MF_00406">
    <property type="entry name" value="FabZ"/>
    <property type="match status" value="1"/>
</dbReference>
<dbReference type="InterPro" id="IPR013114">
    <property type="entry name" value="FabA_FabZ"/>
</dbReference>
<dbReference type="InterPro" id="IPR010084">
    <property type="entry name" value="FabZ"/>
</dbReference>
<dbReference type="InterPro" id="IPR029069">
    <property type="entry name" value="HotDog_dom_sf"/>
</dbReference>
<dbReference type="NCBIfam" id="TIGR01750">
    <property type="entry name" value="fabZ"/>
    <property type="match status" value="1"/>
</dbReference>
<dbReference type="NCBIfam" id="NF000582">
    <property type="entry name" value="PRK00006.1"/>
    <property type="match status" value="1"/>
</dbReference>
<dbReference type="PANTHER" id="PTHR30272">
    <property type="entry name" value="3-HYDROXYACYL-[ACYL-CARRIER-PROTEIN] DEHYDRATASE"/>
    <property type="match status" value="1"/>
</dbReference>
<dbReference type="PANTHER" id="PTHR30272:SF1">
    <property type="entry name" value="3-HYDROXYACYL-[ACYL-CARRIER-PROTEIN] DEHYDRATASE"/>
    <property type="match status" value="1"/>
</dbReference>
<dbReference type="Pfam" id="PF07977">
    <property type="entry name" value="FabA"/>
    <property type="match status" value="1"/>
</dbReference>
<dbReference type="SUPFAM" id="SSF54637">
    <property type="entry name" value="Thioesterase/thiol ester dehydrase-isomerase"/>
    <property type="match status" value="1"/>
</dbReference>
<organism>
    <name type="scientific">Anaplasma phagocytophilum (strain HZ)</name>
    <dbReference type="NCBI Taxonomy" id="212042"/>
    <lineage>
        <taxon>Bacteria</taxon>
        <taxon>Pseudomonadati</taxon>
        <taxon>Pseudomonadota</taxon>
        <taxon>Alphaproteobacteria</taxon>
        <taxon>Rickettsiales</taxon>
        <taxon>Anaplasmataceae</taxon>
        <taxon>Anaplasma</taxon>
        <taxon>phagocytophilum group</taxon>
    </lineage>
</organism>
<gene>
    <name evidence="1" type="primary">fabZ</name>
    <name type="ordered locus">APH_1208</name>
</gene>
<feature type="chain" id="PRO_1000197272" description="3-hydroxyacyl-[acyl-carrier-protein] dehydratase FabZ">
    <location>
        <begin position="1"/>
        <end position="145"/>
    </location>
</feature>
<feature type="active site" evidence="1">
    <location>
        <position position="49"/>
    </location>
</feature>
<reference key="1">
    <citation type="journal article" date="2006" name="PLoS Genet.">
        <title>Comparative genomics of emerging human ehrlichiosis agents.</title>
        <authorList>
            <person name="Dunning Hotopp J.C."/>
            <person name="Lin M."/>
            <person name="Madupu R."/>
            <person name="Crabtree J."/>
            <person name="Angiuoli S.V."/>
            <person name="Eisen J.A."/>
            <person name="Seshadri R."/>
            <person name="Ren Q."/>
            <person name="Wu M."/>
            <person name="Utterback T.R."/>
            <person name="Smith S."/>
            <person name="Lewis M."/>
            <person name="Khouri H."/>
            <person name="Zhang C."/>
            <person name="Niu H."/>
            <person name="Lin Q."/>
            <person name="Ohashi N."/>
            <person name="Zhi N."/>
            <person name="Nelson W.C."/>
            <person name="Brinkac L.M."/>
            <person name="Dodson R.J."/>
            <person name="Rosovitz M.J."/>
            <person name="Sundaram J.P."/>
            <person name="Daugherty S.C."/>
            <person name="Davidsen T."/>
            <person name="Durkin A.S."/>
            <person name="Gwinn M.L."/>
            <person name="Haft D.H."/>
            <person name="Selengut J.D."/>
            <person name="Sullivan S.A."/>
            <person name="Zafar N."/>
            <person name="Zhou L."/>
            <person name="Benahmed F."/>
            <person name="Forberger H."/>
            <person name="Halpin R."/>
            <person name="Mulligan S."/>
            <person name="Robinson J."/>
            <person name="White O."/>
            <person name="Rikihisa Y."/>
            <person name="Tettelin H."/>
        </authorList>
    </citation>
    <scope>NUCLEOTIDE SEQUENCE [LARGE SCALE GENOMIC DNA]</scope>
    <source>
        <strain>HZ</strain>
    </source>
</reference>
<keyword id="KW-0963">Cytoplasm</keyword>
<keyword id="KW-0441">Lipid A biosynthesis</keyword>
<keyword id="KW-0444">Lipid biosynthesis</keyword>
<keyword id="KW-0443">Lipid metabolism</keyword>
<keyword id="KW-0456">Lyase</keyword>
<sequence>MQMDHKQVMRALPHSYPFLLVDKVTECIPGECIVAVKNVTFNEPFFVGHFPGNPIMPGVLIVEALAQASMLCVVCDADGESTGDTSVLFMSIDSARFRKVVVPGDVLVLKSSVCHRRGNSCRFDCRAYVEDVLVTEAQILAMMNK</sequence>
<comment type="function">
    <text evidence="1">Involved in unsaturated fatty acids biosynthesis. Catalyzes the dehydration of short chain beta-hydroxyacyl-ACPs and long chain saturated and unsaturated beta-hydroxyacyl-ACPs.</text>
</comment>
<comment type="catalytic activity">
    <reaction evidence="1">
        <text>a (3R)-hydroxyacyl-[ACP] = a (2E)-enoyl-[ACP] + H2O</text>
        <dbReference type="Rhea" id="RHEA:13097"/>
        <dbReference type="Rhea" id="RHEA-COMP:9925"/>
        <dbReference type="Rhea" id="RHEA-COMP:9945"/>
        <dbReference type="ChEBI" id="CHEBI:15377"/>
        <dbReference type="ChEBI" id="CHEBI:78784"/>
        <dbReference type="ChEBI" id="CHEBI:78827"/>
        <dbReference type="EC" id="4.2.1.59"/>
    </reaction>
</comment>
<comment type="subcellular location">
    <subcellularLocation>
        <location evidence="1">Cytoplasm</location>
    </subcellularLocation>
</comment>
<comment type="similarity">
    <text evidence="1">Belongs to the thioester dehydratase family. FabZ subfamily.</text>
</comment>
<accession>Q2GIR2</accession>